<evidence type="ECO:0000255" key="1">
    <source>
        <dbReference type="HAMAP-Rule" id="MF_00120"/>
    </source>
</evidence>
<dbReference type="EC" id="6.3.5.7" evidence="1"/>
<dbReference type="EMBL" id="CP000557">
    <property type="protein sequence ID" value="ABO65646.1"/>
    <property type="molecule type" value="Genomic_DNA"/>
</dbReference>
<dbReference type="RefSeq" id="WP_008881444.1">
    <property type="nucleotide sequence ID" value="NC_009328.1"/>
</dbReference>
<dbReference type="SMR" id="A4IJZ2"/>
<dbReference type="GeneID" id="87622134"/>
<dbReference type="KEGG" id="gtn:GTNG_0262"/>
<dbReference type="eggNOG" id="COG0154">
    <property type="taxonomic scope" value="Bacteria"/>
</dbReference>
<dbReference type="HOGENOM" id="CLU_009600_0_3_9"/>
<dbReference type="Proteomes" id="UP000001578">
    <property type="component" value="Chromosome"/>
</dbReference>
<dbReference type="GO" id="GO:0030956">
    <property type="term" value="C:glutamyl-tRNA(Gln) amidotransferase complex"/>
    <property type="evidence" value="ECO:0007669"/>
    <property type="project" value="InterPro"/>
</dbReference>
<dbReference type="GO" id="GO:0005524">
    <property type="term" value="F:ATP binding"/>
    <property type="evidence" value="ECO:0007669"/>
    <property type="project" value="UniProtKB-KW"/>
</dbReference>
<dbReference type="GO" id="GO:0050567">
    <property type="term" value="F:glutaminyl-tRNA synthase (glutamine-hydrolyzing) activity"/>
    <property type="evidence" value="ECO:0007669"/>
    <property type="project" value="UniProtKB-UniRule"/>
</dbReference>
<dbReference type="GO" id="GO:0006412">
    <property type="term" value="P:translation"/>
    <property type="evidence" value="ECO:0007669"/>
    <property type="project" value="UniProtKB-UniRule"/>
</dbReference>
<dbReference type="Gene3D" id="3.90.1300.10">
    <property type="entry name" value="Amidase signature (AS) domain"/>
    <property type="match status" value="1"/>
</dbReference>
<dbReference type="HAMAP" id="MF_00120">
    <property type="entry name" value="GatA"/>
    <property type="match status" value="1"/>
</dbReference>
<dbReference type="InterPro" id="IPR000120">
    <property type="entry name" value="Amidase"/>
</dbReference>
<dbReference type="InterPro" id="IPR020556">
    <property type="entry name" value="Amidase_CS"/>
</dbReference>
<dbReference type="InterPro" id="IPR023631">
    <property type="entry name" value="Amidase_dom"/>
</dbReference>
<dbReference type="InterPro" id="IPR036928">
    <property type="entry name" value="AS_sf"/>
</dbReference>
<dbReference type="InterPro" id="IPR004412">
    <property type="entry name" value="GatA"/>
</dbReference>
<dbReference type="NCBIfam" id="TIGR00132">
    <property type="entry name" value="gatA"/>
    <property type="match status" value="1"/>
</dbReference>
<dbReference type="PANTHER" id="PTHR11895:SF151">
    <property type="entry name" value="GLUTAMYL-TRNA(GLN) AMIDOTRANSFERASE SUBUNIT A"/>
    <property type="match status" value="1"/>
</dbReference>
<dbReference type="PANTHER" id="PTHR11895">
    <property type="entry name" value="TRANSAMIDASE"/>
    <property type="match status" value="1"/>
</dbReference>
<dbReference type="Pfam" id="PF01425">
    <property type="entry name" value="Amidase"/>
    <property type="match status" value="1"/>
</dbReference>
<dbReference type="SUPFAM" id="SSF75304">
    <property type="entry name" value="Amidase signature (AS) enzymes"/>
    <property type="match status" value="1"/>
</dbReference>
<dbReference type="PROSITE" id="PS00571">
    <property type="entry name" value="AMIDASES"/>
    <property type="match status" value="1"/>
</dbReference>
<comment type="function">
    <text evidence="1">Allows the formation of correctly charged Gln-tRNA(Gln) through the transamidation of misacylated Glu-tRNA(Gln) in organisms which lack glutaminyl-tRNA synthetase. The reaction takes place in the presence of glutamine and ATP through an activated gamma-phospho-Glu-tRNA(Gln).</text>
</comment>
<comment type="catalytic activity">
    <reaction evidence="1">
        <text>L-glutamyl-tRNA(Gln) + L-glutamine + ATP + H2O = L-glutaminyl-tRNA(Gln) + L-glutamate + ADP + phosphate + H(+)</text>
        <dbReference type="Rhea" id="RHEA:17521"/>
        <dbReference type="Rhea" id="RHEA-COMP:9681"/>
        <dbReference type="Rhea" id="RHEA-COMP:9684"/>
        <dbReference type="ChEBI" id="CHEBI:15377"/>
        <dbReference type="ChEBI" id="CHEBI:15378"/>
        <dbReference type="ChEBI" id="CHEBI:29985"/>
        <dbReference type="ChEBI" id="CHEBI:30616"/>
        <dbReference type="ChEBI" id="CHEBI:43474"/>
        <dbReference type="ChEBI" id="CHEBI:58359"/>
        <dbReference type="ChEBI" id="CHEBI:78520"/>
        <dbReference type="ChEBI" id="CHEBI:78521"/>
        <dbReference type="ChEBI" id="CHEBI:456216"/>
        <dbReference type="EC" id="6.3.5.7"/>
    </reaction>
</comment>
<comment type="subunit">
    <text evidence="1">Heterotrimer of A, B and C subunits.</text>
</comment>
<comment type="similarity">
    <text evidence="1">Belongs to the amidase family. GatA subfamily.</text>
</comment>
<sequence length="485" mass="52824">MSLFDHTVSELHTLLQKKEVSISDLVDESYRRIGEVEEKVQAFLTLNEEQARAKAKELDDKLAKGEETNPLFGLPIGIKDNIVTKGLRTTCASKILYNFDPIYDATVMERLNAAGAITIGKLNMDEFAMGSSTENSGFQLTRNPWDLERVPGGSSGGSAAAVAAGEVPFSLGSDTGGSIRQPAAFCGVVGLKPTYGRVSRFGLVAFASSLDQIGPITRTVEDNAYLLQVIAGVDPMDSTSANIDVPNYVEALTGDIKGLKIAVPKEYLGEGVAEEVRQSVLAALSVLEKLGATWEEVSLPHSKYALATYYLLASSEASANLARFDGVRYGYRTDNAKNLIDMYKQTRSEGFGSEVKRRIMLGTFALSSGYYDAYYKKAQKVRTLIKRDFENVFEQYDVIIGPTTPTPAFKIGEKTSDPLTMYMNDILTIPVNLAGVPAISVPCGFVDGLPVGLQIIGKHFDESTVYRVAHAFEQATDYHKQKPVL</sequence>
<gene>
    <name evidence="1" type="primary">gatA</name>
    <name type="ordered locus">GTNG_0262</name>
</gene>
<accession>A4IJZ2</accession>
<organism>
    <name type="scientific">Geobacillus thermodenitrificans (strain NG80-2)</name>
    <dbReference type="NCBI Taxonomy" id="420246"/>
    <lineage>
        <taxon>Bacteria</taxon>
        <taxon>Bacillati</taxon>
        <taxon>Bacillota</taxon>
        <taxon>Bacilli</taxon>
        <taxon>Bacillales</taxon>
        <taxon>Anoxybacillaceae</taxon>
        <taxon>Geobacillus</taxon>
    </lineage>
</organism>
<feature type="chain" id="PRO_1000015835" description="Glutamyl-tRNA(Gln) amidotransferase subunit A">
    <location>
        <begin position="1"/>
        <end position="485"/>
    </location>
</feature>
<feature type="active site" description="Charge relay system" evidence="1">
    <location>
        <position position="79"/>
    </location>
</feature>
<feature type="active site" description="Charge relay system" evidence="1">
    <location>
        <position position="154"/>
    </location>
</feature>
<feature type="active site" description="Acyl-ester intermediate" evidence="1">
    <location>
        <position position="178"/>
    </location>
</feature>
<name>GATA_GEOTN</name>
<reference key="1">
    <citation type="journal article" date="2007" name="Proc. Natl. Acad. Sci. U.S.A.">
        <title>Genome and proteome of long-chain alkane degrading Geobacillus thermodenitrificans NG80-2 isolated from a deep-subsurface oil reservoir.</title>
        <authorList>
            <person name="Feng L."/>
            <person name="Wang W."/>
            <person name="Cheng J."/>
            <person name="Ren Y."/>
            <person name="Zhao G."/>
            <person name="Gao C."/>
            <person name="Tang Y."/>
            <person name="Liu X."/>
            <person name="Han W."/>
            <person name="Peng X."/>
            <person name="Liu R."/>
            <person name="Wang L."/>
        </authorList>
    </citation>
    <scope>NUCLEOTIDE SEQUENCE [LARGE SCALE GENOMIC DNA]</scope>
    <source>
        <strain>NG80-2</strain>
    </source>
</reference>
<protein>
    <recommendedName>
        <fullName evidence="1">Glutamyl-tRNA(Gln) amidotransferase subunit A</fullName>
        <shortName evidence="1">Glu-ADT subunit A</shortName>
        <ecNumber evidence="1">6.3.5.7</ecNumber>
    </recommendedName>
</protein>
<proteinExistence type="inferred from homology"/>
<keyword id="KW-0067">ATP-binding</keyword>
<keyword id="KW-0436">Ligase</keyword>
<keyword id="KW-0547">Nucleotide-binding</keyword>
<keyword id="KW-0648">Protein biosynthesis</keyword>